<organism>
    <name type="scientific">Vibrio metschnikovii</name>
    <dbReference type="NCBI Taxonomy" id="28172"/>
    <lineage>
        <taxon>Bacteria</taxon>
        <taxon>Pseudomonadati</taxon>
        <taxon>Pseudomonadota</taxon>
        <taxon>Gammaproteobacteria</taxon>
        <taxon>Vibrionales</taxon>
        <taxon>Vibrionaceae</taxon>
        <taxon>Vibrio</taxon>
    </lineage>
</organism>
<comment type="function">
    <text evidence="1">The beta subunit is responsible for the synthesis of L-tryptophan from indole and L-serine.</text>
</comment>
<comment type="catalytic activity">
    <reaction evidence="1">
        <text>(1S,2R)-1-C-(indol-3-yl)glycerol 3-phosphate + L-serine = D-glyceraldehyde 3-phosphate + L-tryptophan + H2O</text>
        <dbReference type="Rhea" id="RHEA:10532"/>
        <dbReference type="ChEBI" id="CHEBI:15377"/>
        <dbReference type="ChEBI" id="CHEBI:33384"/>
        <dbReference type="ChEBI" id="CHEBI:57912"/>
        <dbReference type="ChEBI" id="CHEBI:58866"/>
        <dbReference type="ChEBI" id="CHEBI:59776"/>
        <dbReference type="EC" id="4.2.1.20"/>
    </reaction>
</comment>
<comment type="cofactor">
    <cofactor evidence="1">
        <name>pyridoxal 5'-phosphate</name>
        <dbReference type="ChEBI" id="CHEBI:597326"/>
    </cofactor>
</comment>
<comment type="pathway">
    <text evidence="1">Amino-acid biosynthesis; L-tryptophan biosynthesis; L-tryptophan from chorismate: step 5/5.</text>
</comment>
<comment type="subunit">
    <text evidence="1">Tetramer of two alpha and two beta chains.</text>
</comment>
<comment type="similarity">
    <text evidence="1">Belongs to the TrpB family.</text>
</comment>
<evidence type="ECO:0000255" key="1">
    <source>
        <dbReference type="HAMAP-Rule" id="MF_00133"/>
    </source>
</evidence>
<proteinExistence type="inferred from homology"/>
<gene>
    <name evidence="1" type="primary">trpB</name>
</gene>
<sequence>MAKLNAYFGEYGGQYVPQILVPALDQLEQAFIDAQEDPDFRAEFMSLLQEYAGRPTALTLTRNLTKGTKTKLYLKREDLLHGGAHKTNEVLGQGLVGKRMGKSAIIAETGAGQHGVGSALASALVGLKCRIIMGAKNLERQSPNVFRMKLMAESIPSSVTLKVAVNEALRDWSATETTHYYLGTAAGPHPYPTIVREFQRIIGEETKLQILAREGRLPDAVLACIGGGSNAIGMFADFIDEANVRLIGIEPAGKGIDTHQHGAPLKHGKTGIFFGMKAPLMQDSYGQVEESYSVSAGLDFPSVGPQHAHLNAIGRANYESITDDEALEAFQSIARNEGIIAALESSHALAYAIKMARIDPDKEQLLVVNLSGRGDKDIFTVHQLLEERGAL</sequence>
<protein>
    <recommendedName>
        <fullName evidence="1">Tryptophan synthase beta chain</fullName>
        <ecNumber evidence="1">4.2.1.20</ecNumber>
    </recommendedName>
</protein>
<reference key="1">
    <citation type="submission" date="1992-12" db="EMBL/GenBank/DDBJ databases">
        <title>Cloning and sequence analysis of the trpB, trpA and 3'trpC genes of Vibrio metschinikovii strain RH530.</title>
        <authorList>
            <person name="Kwon Y."/>
            <person name="Moon S."/>
            <person name="Kim J."/>
            <person name="Yoo Y."/>
            <person name="Rho H."/>
        </authorList>
    </citation>
    <scope>NUCLEOTIDE SEQUENCE [GENOMIC DNA]</scope>
    <source>
        <strain>RH530</strain>
    </source>
</reference>
<feature type="chain" id="PRO_0000099018" description="Tryptophan synthase beta chain">
    <location>
        <begin position="1"/>
        <end position="391"/>
    </location>
</feature>
<feature type="modified residue" description="N6-(pyridoxal phosphate)lysine" evidence="1">
    <location>
        <position position="86"/>
    </location>
</feature>
<keyword id="KW-0028">Amino-acid biosynthesis</keyword>
<keyword id="KW-0057">Aromatic amino acid biosynthesis</keyword>
<keyword id="KW-0456">Lyase</keyword>
<keyword id="KW-0663">Pyridoxal phosphate</keyword>
<keyword id="KW-0822">Tryptophan biosynthesis</keyword>
<accession>Q9RCE8</accession>
<name>TRPB_VIBME</name>
<dbReference type="EC" id="4.2.1.20" evidence="1"/>
<dbReference type="EMBL" id="Z19090">
    <property type="protein sequence ID" value="CAA79516.1"/>
    <property type="molecule type" value="Genomic_DNA"/>
</dbReference>
<dbReference type="SMR" id="Q9RCE8"/>
<dbReference type="UniPathway" id="UPA00035">
    <property type="reaction ID" value="UER00044"/>
</dbReference>
<dbReference type="GO" id="GO:0005737">
    <property type="term" value="C:cytoplasm"/>
    <property type="evidence" value="ECO:0007669"/>
    <property type="project" value="TreeGrafter"/>
</dbReference>
<dbReference type="GO" id="GO:0004834">
    <property type="term" value="F:tryptophan synthase activity"/>
    <property type="evidence" value="ECO:0007669"/>
    <property type="project" value="UniProtKB-UniRule"/>
</dbReference>
<dbReference type="CDD" id="cd06446">
    <property type="entry name" value="Trp-synth_B"/>
    <property type="match status" value="1"/>
</dbReference>
<dbReference type="FunFam" id="3.40.50.1100:FF:000004">
    <property type="entry name" value="Tryptophan synthase beta chain"/>
    <property type="match status" value="1"/>
</dbReference>
<dbReference type="Gene3D" id="3.40.50.1100">
    <property type="match status" value="2"/>
</dbReference>
<dbReference type="HAMAP" id="MF_00133">
    <property type="entry name" value="Trp_synth_beta"/>
    <property type="match status" value="1"/>
</dbReference>
<dbReference type="InterPro" id="IPR006653">
    <property type="entry name" value="Trp_synth_b_CS"/>
</dbReference>
<dbReference type="InterPro" id="IPR006654">
    <property type="entry name" value="Trp_synth_beta"/>
</dbReference>
<dbReference type="InterPro" id="IPR023026">
    <property type="entry name" value="Trp_synth_beta/beta-like"/>
</dbReference>
<dbReference type="InterPro" id="IPR001926">
    <property type="entry name" value="TrpB-like_PALP"/>
</dbReference>
<dbReference type="InterPro" id="IPR036052">
    <property type="entry name" value="TrpB-like_PALP_sf"/>
</dbReference>
<dbReference type="NCBIfam" id="TIGR00263">
    <property type="entry name" value="trpB"/>
    <property type="match status" value="1"/>
</dbReference>
<dbReference type="PANTHER" id="PTHR48077:SF3">
    <property type="entry name" value="TRYPTOPHAN SYNTHASE"/>
    <property type="match status" value="1"/>
</dbReference>
<dbReference type="PANTHER" id="PTHR48077">
    <property type="entry name" value="TRYPTOPHAN SYNTHASE-RELATED"/>
    <property type="match status" value="1"/>
</dbReference>
<dbReference type="Pfam" id="PF00291">
    <property type="entry name" value="PALP"/>
    <property type="match status" value="1"/>
</dbReference>
<dbReference type="PIRSF" id="PIRSF001413">
    <property type="entry name" value="Trp_syn_beta"/>
    <property type="match status" value="1"/>
</dbReference>
<dbReference type="SUPFAM" id="SSF53686">
    <property type="entry name" value="Tryptophan synthase beta subunit-like PLP-dependent enzymes"/>
    <property type="match status" value="1"/>
</dbReference>
<dbReference type="PROSITE" id="PS00168">
    <property type="entry name" value="TRP_SYNTHASE_BETA"/>
    <property type="match status" value="1"/>
</dbReference>